<name>LIFO_VIBC3</name>
<protein>
    <recommendedName>
        <fullName evidence="2">Lipase chaperone</fullName>
    </recommendedName>
    <alternativeName>
        <fullName evidence="2">Lipase activator protein</fullName>
    </alternativeName>
    <alternativeName>
        <fullName evidence="2">Lipase foldase</fullName>
    </alternativeName>
    <alternativeName>
        <fullName evidence="2">Lipase helper protein</fullName>
    </alternativeName>
    <alternativeName>
        <fullName evidence="2">Lipase modulator</fullName>
    </alternativeName>
</protein>
<keyword id="KW-0997">Cell inner membrane</keyword>
<keyword id="KW-1003">Cell membrane</keyword>
<keyword id="KW-0143">Chaperone</keyword>
<keyword id="KW-0442">Lipid degradation</keyword>
<keyword id="KW-0443">Lipid metabolism</keyword>
<keyword id="KW-0472">Membrane</keyword>
<keyword id="KW-0812">Transmembrane</keyword>
<keyword id="KW-1133">Transmembrane helix</keyword>
<organism>
    <name type="scientific">Vibrio cholerae serotype O1 (strain ATCC 39541 / Classical Ogawa 395 / O395)</name>
    <dbReference type="NCBI Taxonomy" id="345073"/>
    <lineage>
        <taxon>Bacteria</taxon>
        <taxon>Pseudomonadati</taxon>
        <taxon>Pseudomonadota</taxon>
        <taxon>Gammaproteobacteria</taxon>
        <taxon>Vibrionales</taxon>
        <taxon>Vibrionaceae</taxon>
        <taxon>Vibrio</taxon>
    </lineage>
</organism>
<sequence length="284" mass="32561">MKKIAWSLGILVTIGALCAIVWPSWYPSRPLVTTPSQADIQADQSSPRDLLEYFLSGLGETSLPVIQQQVQRYEQENQGLLIDSSLFAQYVQYKAALSELTLPQASGGLSTQEWWQLHQSLLDLQARYFSAEQQALFAEENRLRELAIEKRRIYEQYGQSEEAQRAWQALLLDQPDFIQRSEATAQLLPQLTQAGQGDTQQRYLARVALVGEQGAQRLAELDDSRATFEQQFQDYYQARAAILVRNELSASEQQTQIQQLREQHFAPEQWRRIDALERLKDNGE</sequence>
<reference key="1">
    <citation type="submission" date="2007-03" db="EMBL/GenBank/DDBJ databases">
        <authorList>
            <person name="Heidelberg J."/>
        </authorList>
    </citation>
    <scope>NUCLEOTIDE SEQUENCE [LARGE SCALE GENOMIC DNA]</scope>
    <source>
        <strain>ATCC 39541 / Classical Ogawa 395 / O395</strain>
    </source>
</reference>
<reference key="2">
    <citation type="journal article" date="2008" name="PLoS ONE">
        <title>A recalibrated molecular clock and independent origins for the cholera pandemic clones.</title>
        <authorList>
            <person name="Feng L."/>
            <person name="Reeves P.R."/>
            <person name="Lan R."/>
            <person name="Ren Y."/>
            <person name="Gao C."/>
            <person name="Zhou Z."/>
            <person name="Ren Y."/>
            <person name="Cheng J."/>
            <person name="Wang W."/>
            <person name="Wang J."/>
            <person name="Qian W."/>
            <person name="Li D."/>
            <person name="Wang L."/>
        </authorList>
    </citation>
    <scope>NUCLEOTIDE SEQUENCE [LARGE SCALE GENOMIC DNA]</scope>
    <source>
        <strain>ATCC 39541 / Classical Ogawa 395 / O395</strain>
    </source>
</reference>
<comment type="function">
    <text evidence="2">May be involved in the folding of the extracellular lipase during its passage through the periplasm.</text>
</comment>
<comment type="subcellular location">
    <subcellularLocation>
        <location evidence="2">Cell inner membrane</location>
        <topology evidence="2">Single-pass membrane protein</topology>
        <orientation evidence="1">Periplasmic side</orientation>
    </subcellularLocation>
</comment>
<comment type="similarity">
    <text evidence="2">Belongs to the lipase chaperone family.</text>
</comment>
<feature type="chain" id="PRO_1000072840" description="Lipase chaperone">
    <location>
        <begin position="1"/>
        <end position="284"/>
    </location>
</feature>
<feature type="transmembrane region" description="Helical" evidence="2">
    <location>
        <begin position="4"/>
        <end position="24"/>
    </location>
</feature>
<evidence type="ECO:0000250" key="1"/>
<evidence type="ECO:0000255" key="2">
    <source>
        <dbReference type="HAMAP-Rule" id="MF_00790"/>
    </source>
</evidence>
<gene>
    <name evidence="2" type="primary">lifO</name>
    <name type="ordered locus">VC0395_1005</name>
    <name type="ordered locus">VC395_A0259</name>
</gene>
<dbReference type="EMBL" id="CP000626">
    <property type="protein sequence ID" value="ABQ19343.1"/>
    <property type="molecule type" value="Genomic_DNA"/>
</dbReference>
<dbReference type="EMBL" id="CP001236">
    <property type="protein sequence ID" value="ACP11100.1"/>
    <property type="molecule type" value="Genomic_DNA"/>
</dbReference>
<dbReference type="RefSeq" id="WP_000717572.1">
    <property type="nucleotide sequence ID" value="NZ_JAACZH010000027.1"/>
</dbReference>
<dbReference type="SMR" id="A5EYU0"/>
<dbReference type="KEGG" id="vco:VC0395_1005"/>
<dbReference type="KEGG" id="vcr:VC395_A0259"/>
<dbReference type="PATRIC" id="fig|345073.21.peg.3021"/>
<dbReference type="eggNOG" id="COG5380">
    <property type="taxonomic scope" value="Bacteria"/>
</dbReference>
<dbReference type="HOGENOM" id="CLU_085683_0_0_6"/>
<dbReference type="OrthoDB" id="5812603at2"/>
<dbReference type="Proteomes" id="UP000000249">
    <property type="component" value="Chromosome 1"/>
</dbReference>
<dbReference type="GO" id="GO:0005886">
    <property type="term" value="C:plasma membrane"/>
    <property type="evidence" value="ECO:0007669"/>
    <property type="project" value="UniProtKB-SubCell"/>
</dbReference>
<dbReference type="GO" id="GO:0051082">
    <property type="term" value="F:unfolded protein binding"/>
    <property type="evidence" value="ECO:0007669"/>
    <property type="project" value="UniProtKB-UniRule"/>
</dbReference>
<dbReference type="GO" id="GO:0016042">
    <property type="term" value="P:lipid catabolic process"/>
    <property type="evidence" value="ECO:0007669"/>
    <property type="project" value="UniProtKB-UniRule"/>
</dbReference>
<dbReference type="GO" id="GO:0006457">
    <property type="term" value="P:protein folding"/>
    <property type="evidence" value="ECO:0007669"/>
    <property type="project" value="UniProtKB-UniRule"/>
</dbReference>
<dbReference type="HAMAP" id="MF_00790">
    <property type="entry name" value="Lipase_chap"/>
    <property type="match status" value="1"/>
</dbReference>
<dbReference type="InterPro" id="IPR004961">
    <property type="entry name" value="Lipase_chaperone"/>
</dbReference>
<dbReference type="NCBIfam" id="NF002337">
    <property type="entry name" value="PRK01294.1-5"/>
    <property type="match status" value="1"/>
</dbReference>
<dbReference type="Pfam" id="PF03280">
    <property type="entry name" value="Lipase_chap"/>
    <property type="match status" value="1"/>
</dbReference>
<dbReference type="SUPFAM" id="SSF158855">
    <property type="entry name" value="Lipase chaperone-like"/>
    <property type="match status" value="1"/>
</dbReference>
<proteinExistence type="inferred from homology"/>
<accession>A5EYU0</accession>
<accession>C3M7V4</accession>